<comment type="function">
    <text evidence="2">Required for coordinating polarized cell growth during interphase with the onset of mitosis.</text>
</comment>
<comment type="subunit">
    <text evidence="2">Interacts with orb6.</text>
</comment>
<comment type="interaction">
    <interactant intactId="EBI-1563284">
        <id>O74558</id>
    </interactant>
    <interactant intactId="EBI-1563264">
        <id>O13310</id>
        <label>orb6</label>
    </interactant>
    <organismsDiffer>false</organismsDiffer>
    <experiments>4</experiments>
</comment>
<comment type="subcellular location">
    <subcellularLocation>
        <location evidence="2">Cytoplasm</location>
    </subcellularLocation>
    <subcellularLocation>
        <location evidence="2">Cytoplasm</location>
        <location evidence="2">Cell cortex</location>
    </subcellularLocation>
    <text>Localizes to the cell periphery and to the division site during septation and cytokinesis.</text>
</comment>
<comment type="similarity">
    <text evidence="4">Belongs to the MOB1/phocein family.</text>
</comment>
<organism>
    <name type="scientific">Schizosaccharomyces pombe (strain 972 / ATCC 24843)</name>
    <name type="common">Fission yeast</name>
    <dbReference type="NCBI Taxonomy" id="284812"/>
    <lineage>
        <taxon>Eukaryota</taxon>
        <taxon>Fungi</taxon>
        <taxon>Dikarya</taxon>
        <taxon>Ascomycota</taxon>
        <taxon>Taphrinomycotina</taxon>
        <taxon>Schizosaccharomycetes</taxon>
        <taxon>Schizosaccharomycetales</taxon>
        <taxon>Schizosaccharomycetaceae</taxon>
        <taxon>Schizosaccharomyces</taxon>
    </lineage>
</organism>
<proteinExistence type="evidence at protein level"/>
<dbReference type="EMBL" id="CU329672">
    <property type="protein sequence ID" value="CAA20697.1"/>
    <property type="molecule type" value="Genomic_DNA"/>
</dbReference>
<dbReference type="PIR" id="T41676">
    <property type="entry name" value="T41676"/>
</dbReference>
<dbReference type="RefSeq" id="NP_587851.1">
    <property type="nucleotide sequence ID" value="NM_001022844.2"/>
</dbReference>
<dbReference type="SMR" id="O74558"/>
<dbReference type="BioGRID" id="275589">
    <property type="interactions" value="8"/>
</dbReference>
<dbReference type="FunCoup" id="O74558">
    <property type="interactions" value="145"/>
</dbReference>
<dbReference type="IntAct" id="O74558">
    <property type="interactions" value="1"/>
</dbReference>
<dbReference type="STRING" id="284812.O74558"/>
<dbReference type="iPTMnet" id="O74558"/>
<dbReference type="PaxDb" id="4896-SPCC970.04c.1"/>
<dbReference type="EnsemblFungi" id="SPCC970.04c.1">
    <property type="protein sequence ID" value="SPCC970.04c.1:pep"/>
    <property type="gene ID" value="SPCC970.04c"/>
</dbReference>
<dbReference type="GeneID" id="2539016"/>
<dbReference type="KEGG" id="spo:2539016"/>
<dbReference type="PomBase" id="SPCC970.04c">
    <property type="gene designation" value="mob2"/>
</dbReference>
<dbReference type="VEuPathDB" id="FungiDB:SPCC970.04c"/>
<dbReference type="eggNOG" id="KOG0440">
    <property type="taxonomic scope" value="Eukaryota"/>
</dbReference>
<dbReference type="HOGENOM" id="CLU_038321_2_0_1"/>
<dbReference type="InParanoid" id="O74558"/>
<dbReference type="OMA" id="CNHSSER"/>
<dbReference type="PhylomeDB" id="O74558"/>
<dbReference type="PRO" id="PR:O74558"/>
<dbReference type="Proteomes" id="UP000002485">
    <property type="component" value="Chromosome III"/>
</dbReference>
<dbReference type="GO" id="GO:0005938">
    <property type="term" value="C:cell cortex"/>
    <property type="evidence" value="ECO:0000314"/>
    <property type="project" value="PomBase"/>
</dbReference>
<dbReference type="GO" id="GO:0032153">
    <property type="term" value="C:cell division site"/>
    <property type="evidence" value="ECO:0000314"/>
    <property type="project" value="PomBase"/>
</dbReference>
<dbReference type="GO" id="GO:0051286">
    <property type="term" value="C:cell tip"/>
    <property type="evidence" value="ECO:0007005"/>
    <property type="project" value="PomBase"/>
</dbReference>
<dbReference type="GO" id="GO:0005737">
    <property type="term" value="C:cytoplasm"/>
    <property type="evidence" value="ECO:0000318"/>
    <property type="project" value="GO_Central"/>
</dbReference>
<dbReference type="GO" id="GO:0005634">
    <property type="term" value="C:nucleus"/>
    <property type="evidence" value="ECO:0000318"/>
    <property type="project" value="GO_Central"/>
</dbReference>
<dbReference type="GO" id="GO:0030295">
    <property type="term" value="F:protein kinase activator activity"/>
    <property type="evidence" value="ECO:0000318"/>
    <property type="project" value="GO_Central"/>
</dbReference>
<dbReference type="GO" id="GO:0051301">
    <property type="term" value="P:cell division"/>
    <property type="evidence" value="ECO:0000318"/>
    <property type="project" value="GO_Central"/>
</dbReference>
<dbReference type="GO" id="GO:0062200">
    <property type="term" value="P:RAM/MOR signaling"/>
    <property type="evidence" value="ECO:0000315"/>
    <property type="project" value="PomBase"/>
</dbReference>
<dbReference type="GO" id="GO:2000100">
    <property type="term" value="P:regulation of establishment or maintenance of bipolar cell polarity regulating cell shape"/>
    <property type="evidence" value="ECO:0000315"/>
    <property type="project" value="PomBase"/>
</dbReference>
<dbReference type="GO" id="GO:0007165">
    <property type="term" value="P:signal transduction"/>
    <property type="evidence" value="ECO:0000318"/>
    <property type="project" value="GO_Central"/>
</dbReference>
<dbReference type="Gene3D" id="1.20.140.30">
    <property type="entry name" value="MOB kinase activator"/>
    <property type="match status" value="1"/>
</dbReference>
<dbReference type="InterPro" id="IPR005301">
    <property type="entry name" value="MOB_kinase_act_fam"/>
</dbReference>
<dbReference type="InterPro" id="IPR036703">
    <property type="entry name" value="MOB_kinase_act_sf"/>
</dbReference>
<dbReference type="PANTHER" id="PTHR22599">
    <property type="entry name" value="MPS ONE BINDER KINASE ACTIVATOR-LIKE MOB"/>
    <property type="match status" value="1"/>
</dbReference>
<dbReference type="Pfam" id="PF03637">
    <property type="entry name" value="Mob1_phocein"/>
    <property type="match status" value="1"/>
</dbReference>
<dbReference type="SMART" id="SM01388">
    <property type="entry name" value="Mob1_phocein"/>
    <property type="match status" value="1"/>
</dbReference>
<dbReference type="SUPFAM" id="SSF101152">
    <property type="entry name" value="Mob1/phocein"/>
    <property type="match status" value="1"/>
</dbReference>
<protein>
    <recommendedName>
        <fullName>Maintenance of ploidy protein mob2</fullName>
    </recommendedName>
</protein>
<reference key="1">
    <citation type="journal article" date="2002" name="Nature">
        <title>The genome sequence of Schizosaccharomyces pombe.</title>
        <authorList>
            <person name="Wood V."/>
            <person name="Gwilliam R."/>
            <person name="Rajandream M.A."/>
            <person name="Lyne M.H."/>
            <person name="Lyne R."/>
            <person name="Stewart A."/>
            <person name="Sgouros J.G."/>
            <person name="Peat N."/>
            <person name="Hayles J."/>
            <person name="Baker S.G."/>
            <person name="Basham D."/>
            <person name="Bowman S."/>
            <person name="Brooks K."/>
            <person name="Brown D."/>
            <person name="Brown S."/>
            <person name="Chillingworth T."/>
            <person name="Churcher C.M."/>
            <person name="Collins M."/>
            <person name="Connor R."/>
            <person name="Cronin A."/>
            <person name="Davis P."/>
            <person name="Feltwell T."/>
            <person name="Fraser A."/>
            <person name="Gentles S."/>
            <person name="Goble A."/>
            <person name="Hamlin N."/>
            <person name="Harris D.E."/>
            <person name="Hidalgo J."/>
            <person name="Hodgson G."/>
            <person name="Holroyd S."/>
            <person name="Hornsby T."/>
            <person name="Howarth S."/>
            <person name="Huckle E.J."/>
            <person name="Hunt S."/>
            <person name="Jagels K."/>
            <person name="James K.D."/>
            <person name="Jones L."/>
            <person name="Jones M."/>
            <person name="Leather S."/>
            <person name="McDonald S."/>
            <person name="McLean J."/>
            <person name="Mooney P."/>
            <person name="Moule S."/>
            <person name="Mungall K.L."/>
            <person name="Murphy L.D."/>
            <person name="Niblett D."/>
            <person name="Odell C."/>
            <person name="Oliver K."/>
            <person name="O'Neil S."/>
            <person name="Pearson D."/>
            <person name="Quail M.A."/>
            <person name="Rabbinowitsch E."/>
            <person name="Rutherford K.M."/>
            <person name="Rutter S."/>
            <person name="Saunders D."/>
            <person name="Seeger K."/>
            <person name="Sharp S."/>
            <person name="Skelton J."/>
            <person name="Simmonds M.N."/>
            <person name="Squares R."/>
            <person name="Squares S."/>
            <person name="Stevens K."/>
            <person name="Taylor K."/>
            <person name="Taylor R.G."/>
            <person name="Tivey A."/>
            <person name="Walsh S.V."/>
            <person name="Warren T."/>
            <person name="Whitehead S."/>
            <person name="Woodward J.R."/>
            <person name="Volckaert G."/>
            <person name="Aert R."/>
            <person name="Robben J."/>
            <person name="Grymonprez B."/>
            <person name="Weltjens I."/>
            <person name="Vanstreels E."/>
            <person name="Rieger M."/>
            <person name="Schaefer M."/>
            <person name="Mueller-Auer S."/>
            <person name="Gabel C."/>
            <person name="Fuchs M."/>
            <person name="Duesterhoeft A."/>
            <person name="Fritzc C."/>
            <person name="Holzer E."/>
            <person name="Moestl D."/>
            <person name="Hilbert H."/>
            <person name="Borzym K."/>
            <person name="Langer I."/>
            <person name="Beck A."/>
            <person name="Lehrach H."/>
            <person name="Reinhardt R."/>
            <person name="Pohl T.M."/>
            <person name="Eger P."/>
            <person name="Zimmermann W."/>
            <person name="Wedler H."/>
            <person name="Wambutt R."/>
            <person name="Purnelle B."/>
            <person name="Goffeau A."/>
            <person name="Cadieu E."/>
            <person name="Dreano S."/>
            <person name="Gloux S."/>
            <person name="Lelaure V."/>
            <person name="Mottier S."/>
            <person name="Galibert F."/>
            <person name="Aves S.J."/>
            <person name="Xiang Z."/>
            <person name="Hunt C."/>
            <person name="Moore K."/>
            <person name="Hurst S.M."/>
            <person name="Lucas M."/>
            <person name="Rochet M."/>
            <person name="Gaillardin C."/>
            <person name="Tallada V.A."/>
            <person name="Garzon A."/>
            <person name="Thode G."/>
            <person name="Daga R.R."/>
            <person name="Cruzado L."/>
            <person name="Jimenez J."/>
            <person name="Sanchez M."/>
            <person name="del Rey F."/>
            <person name="Benito J."/>
            <person name="Dominguez A."/>
            <person name="Revuelta J.L."/>
            <person name="Moreno S."/>
            <person name="Armstrong J."/>
            <person name="Forsburg S.L."/>
            <person name="Cerutti L."/>
            <person name="Lowe T."/>
            <person name="McCombie W.R."/>
            <person name="Paulsen I."/>
            <person name="Potashkin J."/>
            <person name="Shpakovski G.V."/>
            <person name="Ussery D."/>
            <person name="Barrell B.G."/>
            <person name="Nurse P."/>
        </authorList>
    </citation>
    <scope>NUCLEOTIDE SEQUENCE [LARGE SCALE GENOMIC DNA]</scope>
    <source>
        <strain>972 / ATCC 24843</strain>
    </source>
</reference>
<reference key="2">
    <citation type="journal article" date="2003" name="J. Cell Sci.">
        <title>Mob2p interacts with the protein kinase Orb6p to promote coordination of cell polarity with cell cycle progression.</title>
        <authorList>
            <person name="Hou M.-C."/>
            <person name="Wiley D.J."/>
            <person name="Verde F."/>
            <person name="McCollum D."/>
        </authorList>
    </citation>
    <scope>FUNCTION</scope>
    <scope>INTERACTION WITH ORB6</scope>
    <scope>SUBCELLULAR LOCATION</scope>
</reference>
<reference key="3">
    <citation type="journal article" date="2008" name="J. Proteome Res.">
        <title>Phosphoproteome analysis of fission yeast.</title>
        <authorList>
            <person name="Wilson-Grady J.T."/>
            <person name="Villen J."/>
            <person name="Gygi S.P."/>
        </authorList>
    </citation>
    <scope>PHOSPHORYLATION [LARGE SCALE ANALYSIS] AT SER-46 AND SER-48</scope>
    <scope>IDENTIFICATION BY MASS SPECTROMETRY</scope>
</reference>
<feature type="chain" id="PRO_0000193581" description="Maintenance of ploidy protein mob2">
    <location>
        <begin position="1"/>
        <end position="244"/>
    </location>
</feature>
<feature type="region of interest" description="Disordered" evidence="1">
    <location>
        <begin position="14"/>
        <end position="45"/>
    </location>
</feature>
<feature type="compositionally biased region" description="Low complexity" evidence="1">
    <location>
        <begin position="23"/>
        <end position="39"/>
    </location>
</feature>
<feature type="modified residue" description="Phosphoserine" evidence="3">
    <location>
        <position position="46"/>
    </location>
</feature>
<feature type="modified residue" description="Phosphoserine" evidence="3">
    <location>
        <position position="48"/>
    </location>
</feature>
<keyword id="KW-0131">Cell cycle</keyword>
<keyword id="KW-0132">Cell division</keyword>
<keyword id="KW-0963">Cytoplasm</keyword>
<keyword id="KW-0498">Mitosis</keyword>
<keyword id="KW-0597">Phosphoprotein</keyword>
<keyword id="KW-1185">Reference proteome</keyword>
<evidence type="ECO:0000256" key="1">
    <source>
        <dbReference type="SAM" id="MobiDB-lite"/>
    </source>
</evidence>
<evidence type="ECO:0000269" key="2">
    <source>
    </source>
</evidence>
<evidence type="ECO:0000269" key="3">
    <source>
    </source>
</evidence>
<evidence type="ECO:0000305" key="4"/>
<name>MOB2_SCHPO</name>
<accession>O74558</accession>
<gene>
    <name type="primary">mob2</name>
    <name type="ORF">SPCC970.04c</name>
</gene>
<sequence>MFLLNSLSRITRGNRSKRHQNLSDASSSSGSFSKKSSTSQLVRTGSPSVEPTALYLQQPFVRTHLVKGNFSTIVSLPRFVDLDEWVALNVYELFTYLNHFYDVFATFCTVKTCPVMSAAANFDYTWLDNNRKPVHLPAPQYIEYVLAWIENRLHDQNVFPTKAGLPFPSNFLVIVKAIYKQMFRIFAHMYYAHYAEILHLSLEAHWNSFFAHFIAFGKEFQLLDKRDTAPLKDLIVVLENQGNI</sequence>